<accession>B2KE60</accession>
<gene>
    <name evidence="1" type="primary">rsmH</name>
    <name type="synonym">mraW</name>
    <name type="ordered locus">Emin_1256</name>
</gene>
<protein>
    <recommendedName>
        <fullName evidence="1">Ribosomal RNA small subunit methyltransferase H</fullName>
        <ecNumber evidence="1">2.1.1.199</ecNumber>
    </recommendedName>
    <alternativeName>
        <fullName evidence="1">16S rRNA m(4)C1402 methyltransferase</fullName>
    </alternativeName>
    <alternativeName>
        <fullName evidence="1">rRNA (cytosine-N(4)-)-methyltransferase RsmH</fullName>
    </alternativeName>
</protein>
<feature type="chain" id="PRO_0000386863" description="Ribosomal RNA small subunit methyltransferase H">
    <location>
        <begin position="1"/>
        <end position="293"/>
    </location>
</feature>
<feature type="binding site" evidence="1">
    <location>
        <begin position="34"/>
        <end position="36"/>
    </location>
    <ligand>
        <name>S-adenosyl-L-methionine</name>
        <dbReference type="ChEBI" id="CHEBI:59789"/>
    </ligand>
</feature>
<feature type="binding site" evidence="1">
    <location>
        <position position="54"/>
    </location>
    <ligand>
        <name>S-adenosyl-L-methionine</name>
        <dbReference type="ChEBI" id="CHEBI:59789"/>
    </ligand>
</feature>
<feature type="binding site" evidence="1">
    <location>
        <position position="86"/>
    </location>
    <ligand>
        <name>S-adenosyl-L-methionine</name>
        <dbReference type="ChEBI" id="CHEBI:59789"/>
    </ligand>
</feature>
<feature type="binding site" evidence="1">
    <location>
        <position position="101"/>
    </location>
    <ligand>
        <name>S-adenosyl-L-methionine</name>
        <dbReference type="ChEBI" id="CHEBI:59789"/>
    </ligand>
</feature>
<feature type="binding site" evidence="1">
    <location>
        <position position="108"/>
    </location>
    <ligand>
        <name>S-adenosyl-L-methionine</name>
        <dbReference type="ChEBI" id="CHEBI:59789"/>
    </ligand>
</feature>
<evidence type="ECO:0000255" key="1">
    <source>
        <dbReference type="HAMAP-Rule" id="MF_01007"/>
    </source>
</evidence>
<comment type="function">
    <text evidence="1">Specifically methylates the N4 position of cytidine in position 1402 (C1402) of 16S rRNA.</text>
</comment>
<comment type="catalytic activity">
    <reaction evidence="1">
        <text>cytidine(1402) in 16S rRNA + S-adenosyl-L-methionine = N(4)-methylcytidine(1402) in 16S rRNA + S-adenosyl-L-homocysteine + H(+)</text>
        <dbReference type="Rhea" id="RHEA:42928"/>
        <dbReference type="Rhea" id="RHEA-COMP:10286"/>
        <dbReference type="Rhea" id="RHEA-COMP:10287"/>
        <dbReference type="ChEBI" id="CHEBI:15378"/>
        <dbReference type="ChEBI" id="CHEBI:57856"/>
        <dbReference type="ChEBI" id="CHEBI:59789"/>
        <dbReference type="ChEBI" id="CHEBI:74506"/>
        <dbReference type="ChEBI" id="CHEBI:82748"/>
        <dbReference type="EC" id="2.1.1.199"/>
    </reaction>
</comment>
<comment type="subcellular location">
    <subcellularLocation>
        <location evidence="1">Cytoplasm</location>
    </subcellularLocation>
</comment>
<comment type="similarity">
    <text evidence="1">Belongs to the methyltransferase superfamily. RsmH family.</text>
</comment>
<organism>
    <name type="scientific">Elusimicrobium minutum (strain Pei191)</name>
    <dbReference type="NCBI Taxonomy" id="445932"/>
    <lineage>
        <taxon>Bacteria</taxon>
        <taxon>Pseudomonadati</taxon>
        <taxon>Elusimicrobiota</taxon>
        <taxon>Elusimicrobia</taxon>
        <taxon>Elusimicrobiales</taxon>
        <taxon>Elusimicrobiaceae</taxon>
        <taxon>Elusimicrobium</taxon>
    </lineage>
</organism>
<keyword id="KW-0963">Cytoplasm</keyword>
<keyword id="KW-0489">Methyltransferase</keyword>
<keyword id="KW-1185">Reference proteome</keyword>
<keyword id="KW-0698">rRNA processing</keyword>
<keyword id="KW-0949">S-adenosyl-L-methionine</keyword>
<keyword id="KW-0808">Transferase</keyword>
<name>RSMH_ELUMP</name>
<dbReference type="EC" id="2.1.1.199" evidence="1"/>
<dbReference type="EMBL" id="CP001055">
    <property type="protein sequence ID" value="ACC98806.1"/>
    <property type="molecule type" value="Genomic_DNA"/>
</dbReference>
<dbReference type="RefSeq" id="WP_012415421.1">
    <property type="nucleotide sequence ID" value="NC_010644.1"/>
</dbReference>
<dbReference type="SMR" id="B2KE60"/>
<dbReference type="STRING" id="445932.Emin_1256"/>
<dbReference type="KEGG" id="emi:Emin_1256"/>
<dbReference type="HOGENOM" id="CLU_038422_2_0_0"/>
<dbReference type="OrthoDB" id="9806637at2"/>
<dbReference type="Proteomes" id="UP000001029">
    <property type="component" value="Chromosome"/>
</dbReference>
<dbReference type="GO" id="GO:0005737">
    <property type="term" value="C:cytoplasm"/>
    <property type="evidence" value="ECO:0007669"/>
    <property type="project" value="UniProtKB-SubCell"/>
</dbReference>
<dbReference type="GO" id="GO:0071424">
    <property type="term" value="F:rRNA (cytosine-N4-)-methyltransferase activity"/>
    <property type="evidence" value="ECO:0007669"/>
    <property type="project" value="UniProtKB-UniRule"/>
</dbReference>
<dbReference type="GO" id="GO:0070475">
    <property type="term" value="P:rRNA base methylation"/>
    <property type="evidence" value="ECO:0007669"/>
    <property type="project" value="UniProtKB-UniRule"/>
</dbReference>
<dbReference type="Gene3D" id="1.10.150.170">
    <property type="entry name" value="Putative methyltransferase TM0872, insert domain"/>
    <property type="match status" value="1"/>
</dbReference>
<dbReference type="Gene3D" id="3.40.50.150">
    <property type="entry name" value="Vaccinia Virus protein VP39"/>
    <property type="match status" value="1"/>
</dbReference>
<dbReference type="HAMAP" id="MF_01007">
    <property type="entry name" value="16SrRNA_methyltr_H"/>
    <property type="match status" value="1"/>
</dbReference>
<dbReference type="InterPro" id="IPR002903">
    <property type="entry name" value="RsmH"/>
</dbReference>
<dbReference type="InterPro" id="IPR023397">
    <property type="entry name" value="SAM-dep_MeTrfase_MraW_recog"/>
</dbReference>
<dbReference type="InterPro" id="IPR029063">
    <property type="entry name" value="SAM-dependent_MTases_sf"/>
</dbReference>
<dbReference type="NCBIfam" id="TIGR00006">
    <property type="entry name" value="16S rRNA (cytosine(1402)-N(4))-methyltransferase RsmH"/>
    <property type="match status" value="1"/>
</dbReference>
<dbReference type="PANTHER" id="PTHR11265:SF0">
    <property type="entry name" value="12S RRNA N4-METHYLCYTIDINE METHYLTRANSFERASE"/>
    <property type="match status" value="1"/>
</dbReference>
<dbReference type="PANTHER" id="PTHR11265">
    <property type="entry name" value="S-ADENOSYL-METHYLTRANSFERASE MRAW"/>
    <property type="match status" value="1"/>
</dbReference>
<dbReference type="Pfam" id="PF01795">
    <property type="entry name" value="Methyltransf_5"/>
    <property type="match status" value="1"/>
</dbReference>
<dbReference type="PIRSF" id="PIRSF004486">
    <property type="entry name" value="MraW"/>
    <property type="match status" value="1"/>
</dbReference>
<dbReference type="SUPFAM" id="SSF81799">
    <property type="entry name" value="Putative methyltransferase TM0872, insert domain"/>
    <property type="match status" value="1"/>
</dbReference>
<dbReference type="SUPFAM" id="SSF53335">
    <property type="entry name" value="S-adenosyl-L-methionine-dependent methyltransferases"/>
    <property type="match status" value="1"/>
</dbReference>
<proteinExistence type="inferred from homology"/>
<sequence>MNNWTHIPVLTKEIGQMLITDINGVYIDGTLGLGGHTKYLLGLLGKEAKIIGFDKDYNAVKMAEANVADGRLTAINLSYEAAPKVLKDLKIQGGADGVLLDLGLSSYQLDDASRGFSFMGGGPLDMRFDISGQKTAADVVNSYTAEELERIFANYGEETNARNAAAAIVRARVDKKIKTTSELANILAPVLPRRGKTHGATRVFQALRIEVNDELGTVERFIKVLPEVLKPGGRAAVITFHSLEDRIVKNIFKQMSAEGEVKLVNKHVIEPEWEEVKNNRRSRSAKLRVAEKI</sequence>
<reference key="1">
    <citation type="journal article" date="2009" name="Appl. Environ. Microbiol.">
        <title>Genomic analysis of 'Elusimicrobium minutum,' the first cultivated representative of the phylum 'Elusimicrobia' (formerly termite group 1).</title>
        <authorList>
            <person name="Herlemann D.P.R."/>
            <person name="Geissinger O."/>
            <person name="Ikeda-Ohtsubo W."/>
            <person name="Kunin V."/>
            <person name="Sun H."/>
            <person name="Lapidus A."/>
            <person name="Hugenholtz P."/>
            <person name="Brune A."/>
        </authorList>
    </citation>
    <scope>NUCLEOTIDE SEQUENCE [LARGE SCALE GENOMIC DNA]</scope>
    <source>
        <strain>Pei191</strain>
    </source>
</reference>